<reference key="1">
    <citation type="journal article" date="2005" name="J. Bacteriol.">
        <title>Genomic sequence of an otitis media isolate of nontypeable Haemophilus influenzae: comparative study with H. influenzae serotype d, strain KW20.</title>
        <authorList>
            <person name="Harrison A."/>
            <person name="Dyer D.W."/>
            <person name="Gillaspy A."/>
            <person name="Ray W.C."/>
            <person name="Mungur R."/>
            <person name="Carson M.B."/>
            <person name="Zhong H."/>
            <person name="Gipson J."/>
            <person name="Gipson M."/>
            <person name="Johnson L.S."/>
            <person name="Lewis L."/>
            <person name="Bakaletz L.O."/>
            <person name="Munson R.S. Jr."/>
        </authorList>
    </citation>
    <scope>NUCLEOTIDE SEQUENCE [LARGE SCALE GENOMIC DNA]</scope>
    <source>
        <strain>86-028NP</strain>
    </source>
</reference>
<keyword id="KW-0997">Cell inner membrane</keyword>
<keyword id="KW-1003">Cell membrane</keyword>
<keyword id="KW-0201">Cytochrome c-type biogenesis</keyword>
<keyword id="KW-0349">Heme</keyword>
<keyword id="KW-0408">Iron</keyword>
<keyword id="KW-0472">Membrane</keyword>
<keyword id="KW-0479">Metal-binding</keyword>
<keyword id="KW-0735">Signal-anchor</keyword>
<keyword id="KW-0812">Transmembrane</keyword>
<keyword id="KW-1133">Transmembrane helix</keyword>
<name>CCME_HAEI8</name>
<proteinExistence type="inferred from homology"/>
<sequence length="173" mass="19152">MNPRRKSRFKLVIFVVLGIAIASGLMLYALRQNIDLFYTPSEVIQGKDNNPNQKPEVGQRIRVGGMVVEGTVVRDPKSLKVRFDLNDIGPAITVEYEGILPDLFREGQGIVAQGVLTQSAVLSATEVLAKHDENYVPPELGEKMQKVHKPMGIKAADLKGESERDRQEKEGAK</sequence>
<gene>
    <name evidence="1" type="primary">ccmE</name>
    <name evidence="1" type="synonym">cycJ</name>
    <name type="ordered locus">NTHI1257</name>
</gene>
<dbReference type="EMBL" id="CP000057">
    <property type="protein sequence ID" value="AAX88102.1"/>
    <property type="molecule type" value="Genomic_DNA"/>
</dbReference>
<dbReference type="RefSeq" id="WP_005651737.1">
    <property type="nucleotide sequence ID" value="NC_007146.2"/>
</dbReference>
<dbReference type="SMR" id="Q4QLJ5"/>
<dbReference type="GeneID" id="93220103"/>
<dbReference type="KEGG" id="hit:NTHI1257"/>
<dbReference type="HOGENOM" id="CLU_079503_1_0_6"/>
<dbReference type="Proteomes" id="UP000002525">
    <property type="component" value="Chromosome"/>
</dbReference>
<dbReference type="GO" id="GO:0005886">
    <property type="term" value="C:plasma membrane"/>
    <property type="evidence" value="ECO:0007669"/>
    <property type="project" value="UniProtKB-SubCell"/>
</dbReference>
<dbReference type="GO" id="GO:0020037">
    <property type="term" value="F:heme binding"/>
    <property type="evidence" value="ECO:0007669"/>
    <property type="project" value="InterPro"/>
</dbReference>
<dbReference type="GO" id="GO:0046872">
    <property type="term" value="F:metal ion binding"/>
    <property type="evidence" value="ECO:0007669"/>
    <property type="project" value="UniProtKB-KW"/>
</dbReference>
<dbReference type="GO" id="GO:0017004">
    <property type="term" value="P:cytochrome complex assembly"/>
    <property type="evidence" value="ECO:0007669"/>
    <property type="project" value="UniProtKB-KW"/>
</dbReference>
<dbReference type="FunFam" id="2.40.50.140:FF:000104">
    <property type="entry name" value="Cytochrome c-type biogenesis protein CcmE"/>
    <property type="match status" value="1"/>
</dbReference>
<dbReference type="Gene3D" id="2.40.50.140">
    <property type="entry name" value="Nucleic acid-binding proteins"/>
    <property type="match status" value="1"/>
</dbReference>
<dbReference type="HAMAP" id="MF_01959">
    <property type="entry name" value="CcmE"/>
    <property type="match status" value="1"/>
</dbReference>
<dbReference type="InterPro" id="IPR004329">
    <property type="entry name" value="CcmE"/>
</dbReference>
<dbReference type="InterPro" id="IPR036127">
    <property type="entry name" value="CcmE-like_sf"/>
</dbReference>
<dbReference type="InterPro" id="IPR012340">
    <property type="entry name" value="NA-bd_OB-fold"/>
</dbReference>
<dbReference type="NCBIfam" id="NF009638">
    <property type="entry name" value="PRK13165.1"/>
    <property type="match status" value="1"/>
</dbReference>
<dbReference type="NCBIfam" id="NF009727">
    <property type="entry name" value="PRK13254.1-1"/>
    <property type="match status" value="1"/>
</dbReference>
<dbReference type="NCBIfam" id="NF009729">
    <property type="entry name" value="PRK13254.1-3"/>
    <property type="match status" value="1"/>
</dbReference>
<dbReference type="PANTHER" id="PTHR34128">
    <property type="entry name" value="CYTOCHROME C-TYPE BIOGENESIS PROTEIN CCME HOMOLOG, MITOCHONDRIAL"/>
    <property type="match status" value="1"/>
</dbReference>
<dbReference type="PANTHER" id="PTHR34128:SF2">
    <property type="entry name" value="CYTOCHROME C-TYPE BIOGENESIS PROTEIN CCME HOMOLOG, MITOCHONDRIAL"/>
    <property type="match status" value="1"/>
</dbReference>
<dbReference type="Pfam" id="PF03100">
    <property type="entry name" value="CcmE"/>
    <property type="match status" value="1"/>
</dbReference>
<dbReference type="SUPFAM" id="SSF82093">
    <property type="entry name" value="Heme chaperone CcmE"/>
    <property type="match status" value="1"/>
</dbReference>
<protein>
    <recommendedName>
        <fullName evidence="1">Cytochrome c-type biogenesis protein CcmE</fullName>
    </recommendedName>
    <alternativeName>
        <fullName evidence="1">Cytochrome c maturation protein E</fullName>
    </alternativeName>
    <alternativeName>
        <fullName evidence="1">Heme chaperone CcmE</fullName>
    </alternativeName>
</protein>
<comment type="function">
    <text evidence="1">Heme chaperone required for the biogenesis of c-type cytochromes. Transiently binds heme delivered by CcmC and transfers the heme to apo-cytochromes in a process facilitated by CcmF and CcmH.</text>
</comment>
<comment type="subcellular location">
    <subcellularLocation>
        <location evidence="1">Cell inner membrane</location>
        <topology evidence="1">Single-pass type II membrane protein</topology>
        <orientation evidence="1">Periplasmic side</orientation>
    </subcellularLocation>
</comment>
<comment type="similarity">
    <text evidence="1">Belongs to the CcmE/CycJ family.</text>
</comment>
<accession>Q4QLJ5</accession>
<organism>
    <name type="scientific">Haemophilus influenzae (strain 86-028NP)</name>
    <dbReference type="NCBI Taxonomy" id="281310"/>
    <lineage>
        <taxon>Bacteria</taxon>
        <taxon>Pseudomonadati</taxon>
        <taxon>Pseudomonadota</taxon>
        <taxon>Gammaproteobacteria</taxon>
        <taxon>Pasteurellales</taxon>
        <taxon>Pasteurellaceae</taxon>
        <taxon>Haemophilus</taxon>
    </lineage>
</organism>
<evidence type="ECO:0000255" key="1">
    <source>
        <dbReference type="HAMAP-Rule" id="MF_01959"/>
    </source>
</evidence>
<evidence type="ECO:0000256" key="2">
    <source>
        <dbReference type="SAM" id="MobiDB-lite"/>
    </source>
</evidence>
<feature type="chain" id="PRO_0000238813" description="Cytochrome c-type biogenesis protein CcmE">
    <location>
        <begin position="1"/>
        <end position="173"/>
    </location>
</feature>
<feature type="topological domain" description="Cytoplasmic" evidence="1">
    <location>
        <begin position="1"/>
        <end position="8"/>
    </location>
</feature>
<feature type="transmembrane region" description="Helical; Signal-anchor for type II membrane protein" evidence="1">
    <location>
        <begin position="9"/>
        <end position="29"/>
    </location>
</feature>
<feature type="topological domain" description="Periplasmic" evidence="1">
    <location>
        <begin position="30"/>
        <end position="173"/>
    </location>
</feature>
<feature type="region of interest" description="Disordered" evidence="2">
    <location>
        <begin position="139"/>
        <end position="173"/>
    </location>
</feature>
<feature type="compositionally biased region" description="Basic and acidic residues" evidence="2">
    <location>
        <begin position="156"/>
        <end position="173"/>
    </location>
</feature>
<feature type="binding site" description="covalent" evidence="1">
    <location>
        <position position="131"/>
    </location>
    <ligand>
        <name>heme</name>
        <dbReference type="ChEBI" id="CHEBI:30413"/>
    </ligand>
</feature>
<feature type="binding site" description="axial binding residue" evidence="1">
    <location>
        <position position="135"/>
    </location>
    <ligand>
        <name>heme</name>
        <dbReference type="ChEBI" id="CHEBI:30413"/>
    </ligand>
    <ligandPart>
        <name>Fe</name>
        <dbReference type="ChEBI" id="CHEBI:18248"/>
    </ligandPart>
</feature>